<comment type="function">
    <text evidence="1">Catalyzes the phosphorylation of the position 2 hydroxy group of 4-diphosphocytidyl-2C-methyl-D-erythritol.</text>
</comment>
<comment type="catalytic activity">
    <reaction evidence="1">
        <text>4-CDP-2-C-methyl-D-erythritol + ATP = 4-CDP-2-C-methyl-D-erythritol 2-phosphate + ADP + H(+)</text>
        <dbReference type="Rhea" id="RHEA:18437"/>
        <dbReference type="ChEBI" id="CHEBI:15378"/>
        <dbReference type="ChEBI" id="CHEBI:30616"/>
        <dbReference type="ChEBI" id="CHEBI:57823"/>
        <dbReference type="ChEBI" id="CHEBI:57919"/>
        <dbReference type="ChEBI" id="CHEBI:456216"/>
        <dbReference type="EC" id="2.7.1.148"/>
    </reaction>
</comment>
<comment type="pathway">
    <text evidence="1">Isoprenoid biosynthesis; isopentenyl diphosphate biosynthesis via DXP pathway; isopentenyl diphosphate from 1-deoxy-D-xylulose 5-phosphate: step 3/6.</text>
</comment>
<comment type="similarity">
    <text evidence="1">Belongs to the GHMP kinase family. IspE subfamily.</text>
</comment>
<feature type="chain" id="PRO_1000075050" description="4-diphosphocytidyl-2-C-methyl-D-erythritol kinase">
    <location>
        <begin position="1"/>
        <end position="313"/>
    </location>
</feature>
<feature type="active site" evidence="1">
    <location>
        <position position="27"/>
    </location>
</feature>
<feature type="active site" evidence="1">
    <location>
        <position position="152"/>
    </location>
</feature>
<feature type="binding site" evidence="1">
    <location>
        <begin position="110"/>
        <end position="120"/>
    </location>
    <ligand>
        <name>ATP</name>
        <dbReference type="ChEBI" id="CHEBI:30616"/>
    </ligand>
</feature>
<evidence type="ECO:0000255" key="1">
    <source>
        <dbReference type="HAMAP-Rule" id="MF_00061"/>
    </source>
</evidence>
<proteinExistence type="inferred from homology"/>
<name>ISPE_HISS2</name>
<keyword id="KW-0067">ATP-binding</keyword>
<keyword id="KW-0414">Isoprene biosynthesis</keyword>
<keyword id="KW-0418">Kinase</keyword>
<keyword id="KW-0547">Nucleotide-binding</keyword>
<keyword id="KW-0808">Transferase</keyword>
<reference key="1">
    <citation type="submission" date="2008-02" db="EMBL/GenBank/DDBJ databases">
        <title>Complete sequence of Haemophilus somnus 2336.</title>
        <authorList>
            <consortium name="US DOE Joint Genome Institute"/>
            <person name="Siddaramappa S."/>
            <person name="Duncan A.J."/>
            <person name="Challacombe J.F."/>
            <person name="Rainey D."/>
            <person name="Gillaspy A.F."/>
            <person name="Carson M."/>
            <person name="Gipson J."/>
            <person name="Gipson M."/>
            <person name="Bruce D."/>
            <person name="Detter J.C."/>
            <person name="Han C.S."/>
            <person name="Land M."/>
            <person name="Tapia R."/>
            <person name="Thompson L.S."/>
            <person name="Orvis J."/>
            <person name="Zaitshik J."/>
            <person name="Barnes G."/>
            <person name="Brettin T.S."/>
            <person name="Dyer D.W."/>
            <person name="Inzana T.J."/>
        </authorList>
    </citation>
    <scope>NUCLEOTIDE SEQUENCE [LARGE SCALE GENOMIC DNA]</scope>
    <source>
        <strain>2336</strain>
    </source>
</reference>
<protein>
    <recommendedName>
        <fullName evidence="1">4-diphosphocytidyl-2-C-methyl-D-erythritol kinase</fullName>
        <shortName evidence="1">CMK</shortName>
        <ecNumber evidence="1">2.7.1.148</ecNumber>
    </recommendedName>
    <alternativeName>
        <fullName evidence="1">4-(cytidine-5'-diphospho)-2-C-methyl-D-erythritol kinase</fullName>
    </alternativeName>
</protein>
<organism>
    <name type="scientific">Histophilus somni (strain 2336)</name>
    <name type="common">Haemophilus somnus</name>
    <dbReference type="NCBI Taxonomy" id="228400"/>
    <lineage>
        <taxon>Bacteria</taxon>
        <taxon>Pseudomonadati</taxon>
        <taxon>Pseudomonadota</taxon>
        <taxon>Gammaproteobacteria</taxon>
        <taxon>Pasteurellales</taxon>
        <taxon>Pasteurellaceae</taxon>
        <taxon>Histophilus</taxon>
    </lineage>
</organism>
<sequence>MKNYQFSTALLSSQIQGKKLRFPCPAKINLFLYITSQRSDGYHELQTLFQFLNFGDWLSIEIRTDGKIILTPEIPHLKNEDNLIYRAAKLLQQKTGCTLGANLHLDKILPIGGGVGGGSSNAATALVALNYLWNTQLSLSTLAEIGLQLGADVPVFVYGKAAFAEGVGEKLTFCQPPQKWFLVLKPETSISTAIIFKDSNLPRNTSKRPLAELLTTKYENDCEKVVLNHYSEVEEALGWLLQYAPARLTGTGACVFAEFANEQAAQSAFLDKPEKYVGFVAQGTNISPLHQMIEYLSQQKQTLCLPNNTNSRG</sequence>
<dbReference type="EC" id="2.7.1.148" evidence="1"/>
<dbReference type="EMBL" id="CP000947">
    <property type="protein sequence ID" value="ACA31224.1"/>
    <property type="molecule type" value="Genomic_DNA"/>
</dbReference>
<dbReference type="RefSeq" id="WP_012340615.1">
    <property type="nucleotide sequence ID" value="NC_010519.1"/>
</dbReference>
<dbReference type="SMR" id="B0UUJ6"/>
<dbReference type="STRING" id="228400.HSM_1475"/>
<dbReference type="GeneID" id="31487773"/>
<dbReference type="KEGG" id="hsm:HSM_1475"/>
<dbReference type="HOGENOM" id="CLU_053057_3_0_6"/>
<dbReference type="UniPathway" id="UPA00056">
    <property type="reaction ID" value="UER00094"/>
</dbReference>
<dbReference type="GO" id="GO:0050515">
    <property type="term" value="F:4-(cytidine 5'-diphospho)-2-C-methyl-D-erythritol kinase activity"/>
    <property type="evidence" value="ECO:0007669"/>
    <property type="project" value="UniProtKB-UniRule"/>
</dbReference>
<dbReference type="GO" id="GO:0005524">
    <property type="term" value="F:ATP binding"/>
    <property type="evidence" value="ECO:0007669"/>
    <property type="project" value="UniProtKB-UniRule"/>
</dbReference>
<dbReference type="GO" id="GO:0019288">
    <property type="term" value="P:isopentenyl diphosphate biosynthetic process, methylerythritol 4-phosphate pathway"/>
    <property type="evidence" value="ECO:0007669"/>
    <property type="project" value="UniProtKB-UniRule"/>
</dbReference>
<dbReference type="GO" id="GO:0016114">
    <property type="term" value="P:terpenoid biosynthetic process"/>
    <property type="evidence" value="ECO:0007669"/>
    <property type="project" value="InterPro"/>
</dbReference>
<dbReference type="FunFam" id="3.30.230.10:FF:000022">
    <property type="entry name" value="4-diphosphocytidyl-2-C-methyl-D-erythritol kinase"/>
    <property type="match status" value="1"/>
</dbReference>
<dbReference type="Gene3D" id="3.30.230.10">
    <property type="match status" value="1"/>
</dbReference>
<dbReference type="Gene3D" id="3.30.70.890">
    <property type="entry name" value="GHMP kinase, C-terminal domain"/>
    <property type="match status" value="1"/>
</dbReference>
<dbReference type="HAMAP" id="MF_00061">
    <property type="entry name" value="IspE"/>
    <property type="match status" value="1"/>
</dbReference>
<dbReference type="InterPro" id="IPR013750">
    <property type="entry name" value="GHMP_kinase_C_dom"/>
</dbReference>
<dbReference type="InterPro" id="IPR036554">
    <property type="entry name" value="GHMP_kinase_C_sf"/>
</dbReference>
<dbReference type="InterPro" id="IPR006204">
    <property type="entry name" value="GHMP_kinase_N_dom"/>
</dbReference>
<dbReference type="InterPro" id="IPR004424">
    <property type="entry name" value="IspE"/>
</dbReference>
<dbReference type="InterPro" id="IPR020568">
    <property type="entry name" value="Ribosomal_Su5_D2-typ_SF"/>
</dbReference>
<dbReference type="InterPro" id="IPR014721">
    <property type="entry name" value="Ribsml_uS5_D2-typ_fold_subgr"/>
</dbReference>
<dbReference type="NCBIfam" id="TIGR00154">
    <property type="entry name" value="ispE"/>
    <property type="match status" value="1"/>
</dbReference>
<dbReference type="PANTHER" id="PTHR43527">
    <property type="entry name" value="4-DIPHOSPHOCYTIDYL-2-C-METHYL-D-ERYTHRITOL KINASE, CHLOROPLASTIC"/>
    <property type="match status" value="1"/>
</dbReference>
<dbReference type="PANTHER" id="PTHR43527:SF2">
    <property type="entry name" value="4-DIPHOSPHOCYTIDYL-2-C-METHYL-D-ERYTHRITOL KINASE, CHLOROPLASTIC"/>
    <property type="match status" value="1"/>
</dbReference>
<dbReference type="Pfam" id="PF08544">
    <property type="entry name" value="GHMP_kinases_C"/>
    <property type="match status" value="1"/>
</dbReference>
<dbReference type="Pfam" id="PF00288">
    <property type="entry name" value="GHMP_kinases_N"/>
    <property type="match status" value="1"/>
</dbReference>
<dbReference type="PIRSF" id="PIRSF010376">
    <property type="entry name" value="IspE"/>
    <property type="match status" value="1"/>
</dbReference>
<dbReference type="SUPFAM" id="SSF55060">
    <property type="entry name" value="GHMP Kinase, C-terminal domain"/>
    <property type="match status" value="1"/>
</dbReference>
<dbReference type="SUPFAM" id="SSF54211">
    <property type="entry name" value="Ribosomal protein S5 domain 2-like"/>
    <property type="match status" value="1"/>
</dbReference>
<accession>B0UUJ6</accession>
<gene>
    <name evidence="1" type="primary">ispE</name>
    <name type="ordered locus">HSM_1475</name>
</gene>